<evidence type="ECO:0000255" key="1"/>
<evidence type="ECO:0000305" key="2"/>
<organism>
    <name type="scientific">Salmonella typhimurium (strain LT2 / SGSC1412 / ATCC 700720)</name>
    <dbReference type="NCBI Taxonomy" id="99287"/>
    <lineage>
        <taxon>Bacteria</taxon>
        <taxon>Pseudomonadati</taxon>
        <taxon>Pseudomonadota</taxon>
        <taxon>Gammaproteobacteria</taxon>
        <taxon>Enterobacterales</taxon>
        <taxon>Enterobacteriaceae</taxon>
        <taxon>Salmonella</taxon>
    </lineage>
</organism>
<keyword id="KW-0029">Amino-acid transport</keyword>
<keyword id="KW-0997">Cell inner membrane</keyword>
<keyword id="KW-1003">Cell membrane</keyword>
<keyword id="KW-0472">Membrane</keyword>
<keyword id="KW-1185">Reference proteome</keyword>
<keyword id="KW-0812">Transmembrane</keyword>
<keyword id="KW-1133">Transmembrane helix</keyword>
<keyword id="KW-0813">Transport</keyword>
<gene>
    <name type="primary">ansP</name>
    <name type="ordered locus">STM1584</name>
</gene>
<comment type="subcellular location">
    <subcellularLocation>
        <location>Cell inner membrane</location>
        <topology>Multi-pass membrane protein</topology>
    </subcellularLocation>
</comment>
<comment type="similarity">
    <text evidence="2">Belongs to the amino acid-polyamine-organocation (APC) superfamily. Amino acid transporter (AAT) (TC 2.A.3.1) family.</text>
</comment>
<dbReference type="EMBL" id="U04851">
    <property type="protein sequence ID" value="AAA80001.1"/>
    <property type="molecule type" value="Genomic_DNA"/>
</dbReference>
<dbReference type="EMBL" id="AE006468">
    <property type="protein sequence ID" value="AAL20502.1"/>
    <property type="molecule type" value="Genomic_DNA"/>
</dbReference>
<dbReference type="RefSeq" id="NP_460543.1">
    <property type="nucleotide sequence ID" value="NC_003197.2"/>
</dbReference>
<dbReference type="RefSeq" id="WP_000857101.1">
    <property type="nucleotide sequence ID" value="NC_003197.2"/>
</dbReference>
<dbReference type="SMR" id="P40812"/>
<dbReference type="STRING" id="99287.STM1584"/>
<dbReference type="TCDB" id="2.A.3.1.8">
    <property type="family name" value="the amino acid-polyamine-organocation (apc) family"/>
</dbReference>
<dbReference type="PaxDb" id="99287-STM1584"/>
<dbReference type="GeneID" id="1253102"/>
<dbReference type="KEGG" id="stm:STM1584"/>
<dbReference type="PATRIC" id="fig|99287.12.peg.1675"/>
<dbReference type="HOGENOM" id="CLU_007946_9_0_6"/>
<dbReference type="OMA" id="ELPWHNR"/>
<dbReference type="PhylomeDB" id="P40812"/>
<dbReference type="BioCyc" id="SENT99287:STM1584-MONOMER"/>
<dbReference type="Proteomes" id="UP000001014">
    <property type="component" value="Chromosome"/>
</dbReference>
<dbReference type="GO" id="GO:0005886">
    <property type="term" value="C:plasma membrane"/>
    <property type="evidence" value="ECO:0007669"/>
    <property type="project" value="UniProtKB-SubCell"/>
</dbReference>
<dbReference type="GO" id="GO:0006865">
    <property type="term" value="P:amino acid transport"/>
    <property type="evidence" value="ECO:0007669"/>
    <property type="project" value="UniProtKB-KW"/>
</dbReference>
<dbReference type="GO" id="GO:0055085">
    <property type="term" value="P:transmembrane transport"/>
    <property type="evidence" value="ECO:0007669"/>
    <property type="project" value="InterPro"/>
</dbReference>
<dbReference type="FunFam" id="1.20.1740.10:FF:000001">
    <property type="entry name" value="Amino acid permease"/>
    <property type="match status" value="1"/>
</dbReference>
<dbReference type="Gene3D" id="1.20.1740.10">
    <property type="entry name" value="Amino acid/polyamine transporter I"/>
    <property type="match status" value="1"/>
</dbReference>
<dbReference type="InterPro" id="IPR004841">
    <property type="entry name" value="AA-permease/SLC12A_dom"/>
</dbReference>
<dbReference type="InterPro" id="IPR004840">
    <property type="entry name" value="Amino_acid_permease_CS"/>
</dbReference>
<dbReference type="NCBIfam" id="NF011623">
    <property type="entry name" value="PRK15049.1"/>
    <property type="match status" value="1"/>
</dbReference>
<dbReference type="PANTHER" id="PTHR43495">
    <property type="entry name" value="GABA PERMEASE"/>
    <property type="match status" value="1"/>
</dbReference>
<dbReference type="PANTHER" id="PTHR43495:SF1">
    <property type="entry name" value="L-ASPARAGINE PERMEASE"/>
    <property type="match status" value="1"/>
</dbReference>
<dbReference type="Pfam" id="PF00324">
    <property type="entry name" value="AA_permease"/>
    <property type="match status" value="1"/>
</dbReference>
<dbReference type="PIRSF" id="PIRSF006060">
    <property type="entry name" value="AA_transporter"/>
    <property type="match status" value="1"/>
</dbReference>
<dbReference type="PROSITE" id="PS00218">
    <property type="entry name" value="AMINO_ACID_PERMEASE_1"/>
    <property type="match status" value="1"/>
</dbReference>
<sequence length="497" mass="54004">MKTQTTHAAEQHAAKRRWLNAHEEGYHKAMGNRQVQMIAIGGAIGTGLFLGAGARLQMAGPALALVYLICGIFSFFILRALGELVLHRPSSGSFVSYAREFLGEKAAYVAGWMYFINWAMTGIVDITAVALYMHYWGAFGDVPQWVFALGALTIVGTMNMIGVKWFAEMEFWFALIKVLAIVIFLVVGTIFLGTGQPLEGNATGFHLITDNGGFFPHGLLPALVLIQGVVFAFASIELVGTAAGECKDPQKMVPKAINSVIWRIGLFYVGSVVLLVLLLPWNAYQAGQSPFVTFFSKLGVPYIGSIMNIVVLTAALSSLNSGLYCTGRILRSMSMGGSAPKFMAKMSRQHVPYAGILATLVVYVVGVFLNYLVPSRVFEIVLNFASLGIIASWAFIMVCQMRLRQAIKEGKAADVSFKLPGAPFTSWLTLLFLLSVLVLMAFDYPNGTYTIASLPLIAILLVAGWFGVRRRVAEIHRTAPVTADSTESVVLKEEAAT</sequence>
<name>ANSP_SALTY</name>
<protein>
    <recommendedName>
        <fullName>L-asparagine permease</fullName>
    </recommendedName>
    <alternativeName>
        <fullName>L-asparagine transport protein</fullName>
    </alternativeName>
</protein>
<proteinExistence type="inferred from homology"/>
<reference key="1">
    <citation type="journal article" date="1995" name="Microbiology">
        <title>Cloning and molecular analysis of the Salmonella enterica ansP gene, encoding an L-asparagine permease.</title>
        <authorList>
            <person name="Jennings P.J."/>
            <person name="Andereson J.K."/>
            <person name="Beacham I.R."/>
        </authorList>
    </citation>
    <scope>NUCLEOTIDE SEQUENCE [GENOMIC DNA]</scope>
    <source>
        <strain>SA2656</strain>
    </source>
</reference>
<reference key="2">
    <citation type="journal article" date="2001" name="Nature">
        <title>Complete genome sequence of Salmonella enterica serovar Typhimurium LT2.</title>
        <authorList>
            <person name="McClelland M."/>
            <person name="Sanderson K.E."/>
            <person name="Spieth J."/>
            <person name="Clifton S.W."/>
            <person name="Latreille P."/>
            <person name="Courtney L."/>
            <person name="Porwollik S."/>
            <person name="Ali J."/>
            <person name="Dante M."/>
            <person name="Du F."/>
            <person name="Hou S."/>
            <person name="Layman D."/>
            <person name="Leonard S."/>
            <person name="Nguyen C."/>
            <person name="Scott K."/>
            <person name="Holmes A."/>
            <person name="Grewal N."/>
            <person name="Mulvaney E."/>
            <person name="Ryan E."/>
            <person name="Sun H."/>
            <person name="Florea L."/>
            <person name="Miller W."/>
            <person name="Stoneking T."/>
            <person name="Nhan M."/>
            <person name="Waterston R."/>
            <person name="Wilson R.K."/>
        </authorList>
    </citation>
    <scope>NUCLEOTIDE SEQUENCE [LARGE SCALE GENOMIC DNA]</scope>
    <source>
        <strain>LT2 / SGSC1412 / ATCC 700720</strain>
    </source>
</reference>
<feature type="chain" id="PRO_0000054186" description="L-asparagine permease">
    <location>
        <begin position="1"/>
        <end position="497"/>
    </location>
</feature>
<feature type="transmembrane region" description="Helical" evidence="1">
    <location>
        <begin position="34"/>
        <end position="54"/>
    </location>
</feature>
<feature type="transmembrane region" description="Helical" evidence="1">
    <location>
        <begin position="58"/>
        <end position="78"/>
    </location>
</feature>
<feature type="transmembrane region" description="Helical" evidence="1">
    <location>
        <begin position="109"/>
        <end position="129"/>
    </location>
</feature>
<feature type="transmembrane region" description="Helical" evidence="1">
    <location>
        <begin position="146"/>
        <end position="166"/>
    </location>
</feature>
<feature type="transmembrane region" description="Helical" evidence="1">
    <location>
        <begin position="171"/>
        <end position="191"/>
    </location>
</feature>
<feature type="transmembrane region" description="Helical" evidence="1">
    <location>
        <begin position="219"/>
        <end position="239"/>
    </location>
</feature>
<feature type="transmembrane region" description="Helical" evidence="1">
    <location>
        <begin position="264"/>
        <end position="284"/>
    </location>
</feature>
<feature type="transmembrane region" description="Helical" evidence="1">
    <location>
        <begin position="298"/>
        <end position="318"/>
    </location>
</feature>
<feature type="transmembrane region" description="Helical" evidence="1">
    <location>
        <begin position="353"/>
        <end position="373"/>
    </location>
</feature>
<feature type="transmembrane region" description="Helical" evidence="1">
    <location>
        <begin position="378"/>
        <end position="398"/>
    </location>
</feature>
<feature type="transmembrane region" description="Helical" evidence="1">
    <location>
        <begin position="422"/>
        <end position="442"/>
    </location>
</feature>
<feature type="transmembrane region" description="Helical" evidence="1">
    <location>
        <begin position="448"/>
        <end position="468"/>
    </location>
</feature>
<accession>P40812</accession>